<feature type="signal peptide" evidence="1">
    <location>
        <begin position="1"/>
        <end position="19"/>
    </location>
</feature>
<feature type="chain" id="PRO_0000035245" description="BmK AGP-SYPU2">
    <location>
        <begin position="20"/>
        <end position="85"/>
    </location>
</feature>
<feature type="domain" description="LCN-type CS-alpha/beta" evidence="2">
    <location>
        <begin position="21"/>
        <end position="83"/>
    </location>
</feature>
<feature type="site" description="Important for analgesic activity">
    <location>
        <position position="84"/>
    </location>
</feature>
<feature type="site" description="Important for analgesic activity">
    <location>
        <position position="85"/>
    </location>
</feature>
<feature type="disulfide bond" evidence="2 4">
    <location>
        <begin position="31"/>
        <end position="82"/>
    </location>
</feature>
<feature type="disulfide bond" evidence="2 4">
    <location>
        <begin position="35"/>
        <end position="55"/>
    </location>
</feature>
<feature type="disulfide bond" evidence="2 4">
    <location>
        <begin position="41"/>
        <end position="65"/>
    </location>
</feature>
<feature type="disulfide bond" evidence="2 4">
    <location>
        <begin position="45"/>
        <end position="67"/>
    </location>
</feature>
<feature type="sequence variant" description="In isoform TX11P." evidence="3">
    <original>MVII</original>
    <variation>LVFF</variation>
    <location>
        <begin position="4"/>
        <end position="7"/>
    </location>
</feature>
<feature type="sequence variant" description="In isoform TX11P.">
    <original>V</original>
    <variation>L</variation>
    <location>
        <position position="13"/>
    </location>
</feature>
<feature type="mutagenesis site" description="Important decrease in analgesic activity." evidence="5">
    <location>
        <begin position="84"/>
        <end position="85"/>
    </location>
</feature>
<feature type="mutagenesis site" description="Significant decrease in analgesic activity." evidence="5">
    <location>
        <position position="85"/>
    </location>
</feature>
<feature type="strand" evidence="9">
    <location>
        <begin position="21"/>
        <end position="25"/>
    </location>
</feature>
<feature type="helix" evidence="9">
    <location>
        <begin position="38"/>
        <end position="47"/>
    </location>
</feature>
<feature type="strand" evidence="9">
    <location>
        <begin position="51"/>
        <end position="70"/>
    </location>
</feature>
<feature type="strand" evidence="10">
    <location>
        <begin position="79"/>
        <end position="83"/>
    </location>
</feature>
<sequence>MNYMVIISLALLVMTGVESVKDGYIADDRNCPYFCGRNAYCDGECKKNRAESGYCQWASKYGNACWCYKLPDDARIMKPGRCNGG</sequence>
<proteinExistence type="evidence at protein level"/>
<name>SC11_OLIMR</name>
<dbReference type="EMBL" id="AF155364">
    <property type="protein sequence ID" value="AAF31478.1"/>
    <property type="molecule type" value="mRNA"/>
</dbReference>
<dbReference type="EMBL" id="AF132974">
    <property type="protein sequence ID" value="AAF31295.1"/>
    <property type="molecule type" value="mRNA"/>
</dbReference>
<dbReference type="EMBL" id="AF288608">
    <property type="protein sequence ID" value="AAG00581.1"/>
    <property type="molecule type" value="mRNA"/>
</dbReference>
<dbReference type="EMBL" id="AY647171">
    <property type="protein sequence ID" value="AAV64255.1"/>
    <property type="molecule type" value="Genomic_DNA"/>
</dbReference>
<dbReference type="PDB" id="2KBH">
    <property type="method" value="NMR"/>
    <property type="chains" value="A=20-85"/>
</dbReference>
<dbReference type="PDB" id="2KBJ">
    <property type="method" value="NMR"/>
    <property type="chains" value="A=20-85"/>
</dbReference>
<dbReference type="PDBsum" id="2KBH"/>
<dbReference type="PDBsum" id="2KBJ"/>
<dbReference type="SMR" id="Q9NJC7"/>
<dbReference type="EvolutionaryTrace" id="Q9NJC7"/>
<dbReference type="GO" id="GO:0005576">
    <property type="term" value="C:extracellular region"/>
    <property type="evidence" value="ECO:0007669"/>
    <property type="project" value="UniProtKB-SubCell"/>
</dbReference>
<dbReference type="GO" id="GO:0019871">
    <property type="term" value="F:sodium channel inhibitor activity"/>
    <property type="evidence" value="ECO:0007669"/>
    <property type="project" value="InterPro"/>
</dbReference>
<dbReference type="GO" id="GO:0090729">
    <property type="term" value="F:toxin activity"/>
    <property type="evidence" value="ECO:0007669"/>
    <property type="project" value="UniProtKB-KW"/>
</dbReference>
<dbReference type="GO" id="GO:0006952">
    <property type="term" value="P:defense response"/>
    <property type="evidence" value="ECO:0007669"/>
    <property type="project" value="InterPro"/>
</dbReference>
<dbReference type="CDD" id="cd23106">
    <property type="entry name" value="neurotoxins_LC_scorpion"/>
    <property type="match status" value="1"/>
</dbReference>
<dbReference type="Gene3D" id="3.30.30.10">
    <property type="entry name" value="Knottin, scorpion toxin-like"/>
    <property type="match status" value="1"/>
</dbReference>
<dbReference type="InterPro" id="IPR044062">
    <property type="entry name" value="LCN-type_CS_alpha_beta_dom"/>
</dbReference>
<dbReference type="InterPro" id="IPR003614">
    <property type="entry name" value="Scorpion_toxin-like"/>
</dbReference>
<dbReference type="InterPro" id="IPR036574">
    <property type="entry name" value="Scorpion_toxin-like_sf"/>
</dbReference>
<dbReference type="InterPro" id="IPR018218">
    <property type="entry name" value="Scorpion_toxinL"/>
</dbReference>
<dbReference type="InterPro" id="IPR002061">
    <property type="entry name" value="Scorpion_toxinL/defensin"/>
</dbReference>
<dbReference type="Pfam" id="PF00537">
    <property type="entry name" value="Toxin_3"/>
    <property type="match status" value="1"/>
</dbReference>
<dbReference type="PRINTS" id="PR00285">
    <property type="entry name" value="SCORPNTOXIN"/>
</dbReference>
<dbReference type="PRINTS" id="PR00284">
    <property type="entry name" value="TOXIN"/>
</dbReference>
<dbReference type="SMART" id="SM00505">
    <property type="entry name" value="Knot1"/>
    <property type="match status" value="1"/>
</dbReference>
<dbReference type="SUPFAM" id="SSF57095">
    <property type="entry name" value="Scorpion toxin-like"/>
    <property type="match status" value="1"/>
</dbReference>
<dbReference type="PROSITE" id="PS51863">
    <property type="entry name" value="LCN_CSAB"/>
    <property type="match status" value="1"/>
</dbReference>
<evidence type="ECO:0000250" key="1"/>
<evidence type="ECO:0000255" key="2">
    <source>
        <dbReference type="PROSITE-ProRule" id="PRU01210"/>
    </source>
</evidence>
<evidence type="ECO:0000269" key="3">
    <source>
    </source>
</evidence>
<evidence type="ECO:0000269" key="4">
    <source>
    </source>
</evidence>
<evidence type="ECO:0000269" key="5">
    <source>
    </source>
</evidence>
<evidence type="ECO:0000269" key="6">
    <source>
    </source>
</evidence>
<evidence type="ECO:0000305" key="7"/>
<evidence type="ECO:0000305" key="8">
    <source>
    </source>
</evidence>
<evidence type="ECO:0007829" key="9">
    <source>
        <dbReference type="PDB" id="2KBH"/>
    </source>
</evidence>
<evidence type="ECO:0007829" key="10">
    <source>
        <dbReference type="PDB" id="2KBJ"/>
    </source>
</evidence>
<reference key="1">
    <citation type="journal article" date="2000" name="Toxicon">
        <title>Nine novel precursors of Buthus martensii scorpion alpha-toxin homologues.</title>
        <authorList>
            <person name="Zhu S.-Y."/>
            <person name="Li W.-X."/>
            <person name="Zeng X.-C."/>
            <person name="Liu H."/>
            <person name="Jiang D.-H."/>
            <person name="Mao X."/>
        </authorList>
    </citation>
    <scope>NUCLEOTIDE SEQUENCE [MRNA]</scope>
    <source>
        <tissue>Venom gland</tissue>
    </source>
</reference>
<reference key="2">
    <citation type="journal article" date="2001" name="Toxicon">
        <title>Cloning and characterization of cDNA sequences encoding two novel alpha-like-toxin precursors from the Chinese scorpion Buthus martensii Karsch.</title>
        <authorList>
            <person name="Ye J.-G."/>
            <person name="Chen J."/>
            <person name="Zuo X.-P."/>
            <person name="Ji Y.-H."/>
        </authorList>
    </citation>
    <scope>NUCLEOTIDE SEQUENCE [MRNA]</scope>
    <source>
        <tissue>Venom gland</tissue>
    </source>
</reference>
<reference key="3">
    <citation type="journal article" date="2005" name="J. Biochem. Mol. Biol.">
        <title>Genomic sequence analysis and organization of BmKalphaTx11 and BmKalphaTx15 from Buthus martensii Karsch: molecular evolution of alpha-toxin genes.</title>
        <authorList>
            <person name="Xu X."/>
            <person name="Cao Z."/>
            <person name="Sheng J."/>
            <person name="Wu W."/>
            <person name="Luo F."/>
            <person name="Sha Y."/>
            <person name="Mao X."/>
            <person name="Liu H."/>
            <person name="Jiang D."/>
            <person name="Li W."/>
        </authorList>
    </citation>
    <scope>NUCLEOTIDE SEQUENCE [GENOMIC DNA]</scope>
    <scope>VARIANT ISOFORM TX11P 4-MET--ILE-7 DELINS LEU-VAL-PHE-PHE</scope>
    <source>
        <tissue>Venom gland</tissue>
    </source>
</reference>
<reference key="4">
    <citation type="journal article" date="2011" name="Mol. Biol. (Mosk.)">
        <title>Purification, characterization and cDNA cloning of an analgesic peptide from the Chinese scorpion Buthus martensii Karsch (BmK AGP-SYPU2).</title>
        <authorList>
            <person name="Zhang R."/>
            <person name="Yang Z."/>
            <person name="Liu Y.F."/>
            <person name="Cui Y."/>
            <person name="Zhang J.H."/>
        </authorList>
    </citation>
    <scope>NUCLEOTIDE SEQUENCE [MRNA]</scope>
    <scope>PARTIAL PROTEIN SEQUENCE</scope>
    <scope>FUNCTION</scope>
    <source>
        <tissue>Venom</tissue>
        <tissue>Venom gland</tissue>
    </source>
</reference>
<reference key="5">
    <citation type="journal article" date="2010" name="BMB Rep.">
        <title>Soluble expression, purification and the role of C-terminal glycine residues in scorpion toxin BmK AGP-SYPU2.</title>
        <authorList>
            <person name="Zhang R."/>
            <person name="Cui Y."/>
            <person name="Zhang X."/>
            <person name="Yang Z."/>
            <person name="Zhao Y."/>
            <person name="Song Y."/>
            <person name="Wu C."/>
            <person name="Zhang J."/>
        </authorList>
    </citation>
    <scope>FUNCTION</scope>
    <scope>BIOASSAY</scope>
    <scope>SITES GLY-84 AND GLY-85</scope>
    <scope>MUTAGENESIS OF 84-GLY-GLY-85 AND GLY-85</scope>
</reference>
<reference key="6">
    <citation type="journal article" date="2010" name="Biochem. Biophys. Res. Commun.">
        <title>Solution structure of BmKalphaTx11, a toxin from the venom of the Chinese scorpion Buthus martensii Karsch.</title>
        <authorList>
            <person name="Zhu J."/>
            <person name="Tong X."/>
            <person name="Cao C."/>
            <person name="Wu G."/>
            <person name="Zhang N."/>
            <person name="Wu H."/>
        </authorList>
    </citation>
    <scope>STRUCTURE BY NMR OF 20-85</scope>
    <scope>DISULFIDE BONDS</scope>
</reference>
<accession>Q9NJC7</accession>
<accession>Q49S26</accession>
<accession>Q9NJP8</accession>
<protein>
    <recommendedName>
        <fullName>BmK AGP-SYPU2</fullName>
    </recommendedName>
    <alternativeName>
        <fullName>Alpha-neurotoxin Tx11</fullName>
    </alternativeName>
    <alternativeName>
        <fullName>Alpha-toxin 2</fullName>
    </alternativeName>
    <alternativeName>
        <fullName>BmKalpha2</fullName>
    </alternativeName>
    <alternativeName>
        <fullName>BmKalphaTx11</fullName>
    </alternativeName>
    <alternativeName>
        <fullName>BmKalphaTx11'</fullName>
    </alternativeName>
    <alternativeName>
        <fullName>Toxin BmTX11'</fullName>
    </alternativeName>
    <alternativeName>
        <fullName>Toxin Bmka2</fullName>
    </alternativeName>
</protein>
<keyword id="KW-0002">3D-structure</keyword>
<keyword id="KW-0903">Direct protein sequencing</keyword>
<keyword id="KW-1015">Disulfide bond</keyword>
<keyword id="KW-0872">Ion channel impairing toxin</keyword>
<keyword id="KW-0528">Neurotoxin</keyword>
<keyword id="KW-0964">Secreted</keyword>
<keyword id="KW-0732">Signal</keyword>
<keyword id="KW-0800">Toxin</keyword>
<keyword id="KW-0738">Voltage-gated sodium channel impairing toxin</keyword>
<organism>
    <name type="scientific">Olivierus martensii</name>
    <name type="common">Manchurian scorpion</name>
    <name type="synonym">Mesobuthus martensii</name>
    <dbReference type="NCBI Taxonomy" id="34649"/>
    <lineage>
        <taxon>Eukaryota</taxon>
        <taxon>Metazoa</taxon>
        <taxon>Ecdysozoa</taxon>
        <taxon>Arthropoda</taxon>
        <taxon>Chelicerata</taxon>
        <taxon>Arachnida</taxon>
        <taxon>Scorpiones</taxon>
        <taxon>Buthida</taxon>
        <taxon>Buthoidea</taxon>
        <taxon>Buthidae</taxon>
        <taxon>Olivierus</taxon>
    </lineage>
</organism>
<comment type="function">
    <text evidence="1 5 6">Alpha toxins bind voltage-independently at site-3 of sodium channels (Nav) and inhibit the inactivation of the activated channels, thereby blocking neuronal transmission (By similarity). Shows analgesic activity when intraperitoneally injected into mice.</text>
</comment>
<comment type="subcellular location">
    <subcellularLocation>
        <location>Secreted</location>
    </subcellularLocation>
</comment>
<comment type="tissue specificity">
    <text>Expressed by the venom gland.</text>
</comment>
<comment type="domain">
    <text evidence="7">Has the structural arrangement of an alpha-helix connected to antiparallel beta-sheets by disulfide bonds (CS-alpha/beta).</text>
</comment>
<comment type="miscellaneous">
    <text evidence="8">Exists only in one form, with a trans isomerization at 28-Asp-Arg-29. The cis isomere does not exist (PubMed:19932686).</text>
</comment>
<comment type="similarity">
    <text evidence="7">Belongs to the long (4 C-C) scorpion toxin superfamily. Sodium channel inhibitor family. Alpha subfamily.</text>
</comment>